<proteinExistence type="evidence at protein level"/>
<sequence>MSDRKAVIKNADMSEDMQQDAVDCATQAMEKYNIEKDIAAYIKKEFDKKYNPTWHCIVGRNFGSYVTHETKHFIYFYLGQVAILLFKSG</sequence>
<accession>Q78P75</accession>
<name>DYL2_RAT</name>
<dbReference type="EMBL" id="AY034383">
    <property type="protein sequence ID" value="AAK57536.1"/>
    <property type="molecule type" value="mRNA"/>
</dbReference>
<dbReference type="EMBL" id="BC061874">
    <property type="protein sequence ID" value="AAH61874.1"/>
    <property type="molecule type" value="mRNA"/>
</dbReference>
<dbReference type="RefSeq" id="NP_542428.1">
    <property type="nucleotide sequence ID" value="NM_080697.2"/>
</dbReference>
<dbReference type="RefSeq" id="XP_006247139.1">
    <property type="nucleotide sequence ID" value="XM_006247077.4"/>
</dbReference>
<dbReference type="RefSeq" id="XP_038941021.1">
    <property type="nucleotide sequence ID" value="XM_039085093.2"/>
</dbReference>
<dbReference type="RefSeq" id="XP_063124421.1">
    <property type="nucleotide sequence ID" value="XM_063268351.1"/>
</dbReference>
<dbReference type="PDB" id="1PWJ">
    <property type="method" value="NMR"/>
    <property type="chains" value="A=1-89"/>
</dbReference>
<dbReference type="PDB" id="1PWK">
    <property type="method" value="NMR"/>
    <property type="chains" value="A=1-89"/>
</dbReference>
<dbReference type="PDBsum" id="1PWJ"/>
<dbReference type="PDBsum" id="1PWK"/>
<dbReference type="SMR" id="Q78P75"/>
<dbReference type="BioGRID" id="250846">
    <property type="interactions" value="3"/>
</dbReference>
<dbReference type="FunCoup" id="Q78P75">
    <property type="interactions" value="2519"/>
</dbReference>
<dbReference type="IntAct" id="Q78P75">
    <property type="interactions" value="2"/>
</dbReference>
<dbReference type="MINT" id="Q78P75"/>
<dbReference type="STRING" id="10116.ENSRNOP00000012279"/>
<dbReference type="iPTMnet" id="Q78P75"/>
<dbReference type="PhosphoSitePlus" id="Q78P75"/>
<dbReference type="SwissPalm" id="Q78P75"/>
<dbReference type="jPOST" id="Q78P75"/>
<dbReference type="PaxDb" id="10116-ENSRNOP00000012279"/>
<dbReference type="Ensembl" id="ENSRNOT00000012279.5">
    <property type="protein sequence ID" value="ENSRNOP00000012279.3"/>
    <property type="gene ID" value="ENSRNOG00000008921.5"/>
</dbReference>
<dbReference type="GeneID" id="140734"/>
<dbReference type="KEGG" id="rno:140734"/>
<dbReference type="AGR" id="RGD:619860"/>
<dbReference type="CTD" id="140735"/>
<dbReference type="RGD" id="619860">
    <property type="gene designation" value="Dynll2"/>
</dbReference>
<dbReference type="eggNOG" id="KOG3430">
    <property type="taxonomic scope" value="Eukaryota"/>
</dbReference>
<dbReference type="GeneTree" id="ENSGT00940000172072"/>
<dbReference type="HOGENOM" id="CLU_070944_4_0_1"/>
<dbReference type="InParanoid" id="Q78P75"/>
<dbReference type="OMA" id="THEKGHF"/>
<dbReference type="OrthoDB" id="4510at9989"/>
<dbReference type="PhylomeDB" id="Q78P75"/>
<dbReference type="TreeFam" id="TF300264"/>
<dbReference type="Reactome" id="R-RNO-139910">
    <property type="pathway name" value="Activation of BMF and translocation to mitochondria"/>
</dbReference>
<dbReference type="Reactome" id="R-RNO-141444">
    <property type="pathway name" value="Amplification of signal from unattached kinetochores via a MAD2 inhibitory signal"/>
</dbReference>
<dbReference type="Reactome" id="R-RNO-1632852">
    <property type="pathway name" value="Macroautophagy"/>
</dbReference>
<dbReference type="Reactome" id="R-RNO-2132295">
    <property type="pathway name" value="MHC class II antigen presentation"/>
</dbReference>
<dbReference type="Reactome" id="R-RNO-2467813">
    <property type="pathway name" value="Separation of Sister Chromatids"/>
</dbReference>
<dbReference type="Reactome" id="R-RNO-2500257">
    <property type="pathway name" value="Resolution of Sister Chromatid Cohesion"/>
</dbReference>
<dbReference type="Reactome" id="R-RNO-3371497">
    <property type="pathway name" value="HSP90 chaperone cycle for steroid hormone receptors (SHR) in the presence of ligand"/>
</dbReference>
<dbReference type="Reactome" id="R-RNO-5620924">
    <property type="pathway name" value="Intraflagellar transport"/>
</dbReference>
<dbReference type="Reactome" id="R-RNO-5663220">
    <property type="pathway name" value="RHO GTPases Activate Formins"/>
</dbReference>
<dbReference type="Reactome" id="R-RNO-6807878">
    <property type="pathway name" value="COPI-mediated anterograde transport"/>
</dbReference>
<dbReference type="Reactome" id="R-RNO-6811436">
    <property type="pathway name" value="COPI-independent Golgi-to-ER retrograde traffic"/>
</dbReference>
<dbReference type="Reactome" id="R-RNO-68877">
    <property type="pathway name" value="Mitotic Prometaphase"/>
</dbReference>
<dbReference type="Reactome" id="R-RNO-9646399">
    <property type="pathway name" value="Aggrephagy"/>
</dbReference>
<dbReference type="Reactome" id="R-RNO-9648025">
    <property type="pathway name" value="EML4 and NUDC in mitotic spindle formation"/>
</dbReference>
<dbReference type="EvolutionaryTrace" id="Q78P75"/>
<dbReference type="PRO" id="PR:Q78P75"/>
<dbReference type="Proteomes" id="UP000002494">
    <property type="component" value="Chromosome 10"/>
</dbReference>
<dbReference type="Bgee" id="ENSRNOG00000008921">
    <property type="expression patterns" value="Expressed in frontal cortex and 19 other cell types or tissues"/>
</dbReference>
<dbReference type="GO" id="GO:0097731">
    <property type="term" value="C:9+0 non-motile cilium"/>
    <property type="evidence" value="ECO:0000266"/>
    <property type="project" value="RGD"/>
</dbReference>
<dbReference type="GO" id="GO:0005813">
    <property type="term" value="C:centrosome"/>
    <property type="evidence" value="ECO:0000266"/>
    <property type="project" value="RGD"/>
</dbReference>
<dbReference type="GO" id="GO:0005737">
    <property type="term" value="C:cytoplasm"/>
    <property type="evidence" value="ECO:0007669"/>
    <property type="project" value="UniProtKB-KW"/>
</dbReference>
<dbReference type="GO" id="GO:0005868">
    <property type="term" value="C:cytoplasmic dynein complex"/>
    <property type="evidence" value="ECO:0000314"/>
    <property type="project" value="MGI"/>
</dbReference>
<dbReference type="GO" id="GO:0005856">
    <property type="term" value="C:cytoskeleton"/>
    <property type="evidence" value="ECO:0000266"/>
    <property type="project" value="RGD"/>
</dbReference>
<dbReference type="GO" id="GO:0098978">
    <property type="term" value="C:glutamatergic synapse"/>
    <property type="evidence" value="ECO:0000314"/>
    <property type="project" value="SynGO"/>
</dbReference>
<dbReference type="GO" id="GO:0005874">
    <property type="term" value="C:microtubule"/>
    <property type="evidence" value="ECO:0007669"/>
    <property type="project" value="UniProtKB-KW"/>
</dbReference>
<dbReference type="GO" id="GO:0031475">
    <property type="term" value="C:myosin V complex"/>
    <property type="evidence" value="ECO:0000266"/>
    <property type="project" value="RGD"/>
</dbReference>
<dbReference type="GO" id="GO:0098794">
    <property type="term" value="C:postsynapse"/>
    <property type="evidence" value="ECO:0000266"/>
    <property type="project" value="RGD"/>
</dbReference>
<dbReference type="GO" id="GO:0014069">
    <property type="term" value="C:postsynaptic density"/>
    <property type="evidence" value="ECO:0000314"/>
    <property type="project" value="SynGO"/>
</dbReference>
<dbReference type="GO" id="GO:0045505">
    <property type="term" value="F:dynein intermediate chain binding"/>
    <property type="evidence" value="ECO:0000318"/>
    <property type="project" value="GO_Central"/>
</dbReference>
<dbReference type="GO" id="GO:0042802">
    <property type="term" value="F:identical protein binding"/>
    <property type="evidence" value="ECO:0000353"/>
    <property type="project" value="RGD"/>
</dbReference>
<dbReference type="GO" id="GO:0044877">
    <property type="term" value="F:protein-containing complex binding"/>
    <property type="evidence" value="ECO:0000314"/>
    <property type="project" value="RGD"/>
</dbReference>
<dbReference type="GO" id="GO:0097110">
    <property type="term" value="F:scaffold protein binding"/>
    <property type="evidence" value="ECO:0000353"/>
    <property type="project" value="RGD"/>
</dbReference>
<dbReference type="GO" id="GO:0007017">
    <property type="term" value="P:microtubule-based process"/>
    <property type="evidence" value="ECO:0007669"/>
    <property type="project" value="InterPro"/>
</dbReference>
<dbReference type="CDD" id="cd21452">
    <property type="entry name" value="DLC-like_DYNLL1_DYNLL2"/>
    <property type="match status" value="1"/>
</dbReference>
<dbReference type="FunFam" id="3.30.740.10:FF:000001">
    <property type="entry name" value="Dynein light chain"/>
    <property type="match status" value="1"/>
</dbReference>
<dbReference type="Gene3D" id="3.30.740.10">
    <property type="entry name" value="Protein Inhibitor Of Neuronal Nitric Oxide Synthase"/>
    <property type="match status" value="1"/>
</dbReference>
<dbReference type="InterPro" id="IPR037177">
    <property type="entry name" value="DLC_sf"/>
</dbReference>
<dbReference type="InterPro" id="IPR019763">
    <property type="entry name" value="Dynein_light_1/2_CS"/>
</dbReference>
<dbReference type="InterPro" id="IPR001372">
    <property type="entry name" value="Dynein_light_chain_typ-1/2"/>
</dbReference>
<dbReference type="PANTHER" id="PTHR11886">
    <property type="entry name" value="DYNEIN LIGHT CHAIN"/>
    <property type="match status" value="1"/>
</dbReference>
<dbReference type="PANTHER" id="PTHR11886:SF113">
    <property type="entry name" value="DYNEIN LIGHT CHAIN 2, CYTOPLASMIC"/>
    <property type="match status" value="1"/>
</dbReference>
<dbReference type="Pfam" id="PF01221">
    <property type="entry name" value="Dynein_light"/>
    <property type="match status" value="1"/>
</dbReference>
<dbReference type="SMART" id="SM01375">
    <property type="entry name" value="Dynein_light"/>
    <property type="match status" value="1"/>
</dbReference>
<dbReference type="SUPFAM" id="SSF54648">
    <property type="entry name" value="DLC"/>
    <property type="match status" value="1"/>
</dbReference>
<dbReference type="PROSITE" id="PS01239">
    <property type="entry name" value="DYNEIN_LIGHT_1"/>
    <property type="match status" value="1"/>
</dbReference>
<protein>
    <recommendedName>
        <fullName>Dynein light chain 2, cytoplasmic</fullName>
    </recommendedName>
    <alternativeName>
        <fullName>Dynein light chain LC8-type 2</fullName>
    </alternativeName>
</protein>
<feature type="chain" id="PRO_0000195134" description="Dynein light chain 2, cytoplasmic">
    <location>
        <begin position="1"/>
        <end position="89"/>
    </location>
</feature>
<feature type="site" description="Interaction with myosin V motor complex" evidence="1">
    <location>
        <position position="41"/>
    </location>
</feature>
<feature type="strand" evidence="10">
    <location>
        <begin position="7"/>
        <end position="11"/>
    </location>
</feature>
<feature type="helix" evidence="10">
    <location>
        <begin position="16"/>
        <end position="31"/>
    </location>
</feature>
<feature type="helix" evidence="10">
    <location>
        <begin position="36"/>
        <end position="50"/>
    </location>
</feature>
<feature type="strand" evidence="10">
    <location>
        <begin position="57"/>
        <end position="61"/>
    </location>
</feature>
<feature type="strand" evidence="11">
    <location>
        <begin position="64"/>
        <end position="66"/>
    </location>
</feature>
<feature type="turn" evidence="10">
    <location>
        <begin position="67"/>
        <end position="69"/>
    </location>
</feature>
<feature type="strand" evidence="10">
    <location>
        <begin position="71"/>
        <end position="78"/>
    </location>
</feature>
<feature type="strand" evidence="10">
    <location>
        <begin position="81"/>
        <end position="87"/>
    </location>
</feature>
<reference key="1">
    <citation type="journal article" date="2002" name="J. Neurosci.">
        <title>Gephyrin interacts with dynein light chains 1 and 2, components of motor protein complexes.</title>
        <authorList>
            <person name="Fuhrmann J.C."/>
            <person name="Kins S."/>
            <person name="Rostaing P."/>
            <person name="El Far O."/>
            <person name="Kirsch J."/>
            <person name="Sheng M."/>
            <person name="Triller A."/>
            <person name="Betz H."/>
            <person name="Kneussel M."/>
        </authorList>
    </citation>
    <scope>NUCLEOTIDE SEQUENCE [MRNA]</scope>
    <scope>SUBCELLULAR LOCATION</scope>
    <scope>INTERACTION WITH GPHN</scope>
</reference>
<reference key="2">
    <citation type="journal article" date="2004" name="Genome Res.">
        <title>The status, quality, and expansion of the NIH full-length cDNA project: the Mammalian Gene Collection (MGC).</title>
        <authorList>
            <consortium name="The MGC Project Team"/>
        </authorList>
    </citation>
    <scope>NUCLEOTIDE SEQUENCE [LARGE SCALE MRNA]</scope>
    <source>
        <tissue>Prostate</tissue>
    </source>
</reference>
<reference key="3">
    <citation type="submission" date="2007-07" db="UniProtKB">
        <authorList>
            <person name="Lubec G."/>
            <person name="Diao W."/>
            <person name="Kang S.U."/>
        </authorList>
    </citation>
    <scope>PROTEIN SEQUENCE OF 32-43 AND 72-87</scope>
    <scope>IDENTIFICATION BY MASS SPECTROMETRY</scope>
    <source>
        <strain>Sprague-Dawley</strain>
        <tissue>Brain</tissue>
        <tissue>Hippocampus</tissue>
    </source>
</reference>
<reference key="4">
    <citation type="journal article" date="2001" name="Cell Motil. Cytoskeleton">
        <title>Light chains of mammalian cytoplasmic dynein: identification and characterization of a family of LC8 light chains.</title>
        <authorList>
            <person name="Wilson M.J."/>
            <person name="Salata M.W."/>
            <person name="Susalka S.J."/>
            <person name="Pfister K.K."/>
        </authorList>
    </citation>
    <scope>IDENTIFICATION IN THE CYTOPLASMIC DYNEIN 1 COMPLEX</scope>
</reference>
<reference key="5">
    <citation type="journal article" date="2001" name="J. Gen. Virol.">
        <title>Molecular basis for the interaction between rabies virus phosphoprotein P and the dynein light chain LC8: dissociation of dynein-binding properties and transcriptional functionality of P.</title>
        <authorList>
            <person name="Poisson N."/>
            <person name="Real E."/>
            <person name="Gaudin Y."/>
            <person name="Vaney M.C."/>
            <person name="King S."/>
            <person name="Jacob Y."/>
            <person name="Tordo N."/>
            <person name="Blondel D."/>
        </authorList>
    </citation>
    <scope>INTERACTION WITH RABIES VIRUS PHOSPHOPROTEIN (MICROBIAL INFECTION)</scope>
</reference>
<reference key="6">
    <citation type="journal article" date="2005" name="Cell. Mol. Neurobiol.">
        <title>Subcellular localization of PMES-2 proteins regulated by their two cytoskeleton-associated domains.</title>
        <authorList>
            <person name="Ninomiya K."/>
            <person name="Ishimoto T."/>
            <person name="Taguchi T."/>
        </authorList>
    </citation>
    <scope>INTERACTION WITH BCAS1</scope>
    <source>
        <tissue>Brain</tissue>
    </source>
</reference>
<reference key="7">
    <citation type="journal article" date="2003" name="J. Biol. Chem.">
        <title>Structure of the monomeric 8-kDa dynein light chain and mechanism of the domain-swapped dimer assembly.</title>
        <authorList>
            <person name="Wang W."/>
            <person name="Lo K.-W."/>
            <person name="Kan H.-M."/>
            <person name="Fan J.-S."/>
            <person name="Zhang M."/>
        </authorList>
    </citation>
    <scope>STRUCTURE BY NMR</scope>
    <scope>SUBUNIT</scope>
</reference>
<organism>
    <name type="scientific">Rattus norvegicus</name>
    <name type="common">Rat</name>
    <dbReference type="NCBI Taxonomy" id="10116"/>
    <lineage>
        <taxon>Eukaryota</taxon>
        <taxon>Metazoa</taxon>
        <taxon>Chordata</taxon>
        <taxon>Craniata</taxon>
        <taxon>Vertebrata</taxon>
        <taxon>Euteleostomi</taxon>
        <taxon>Mammalia</taxon>
        <taxon>Eutheria</taxon>
        <taxon>Euarchontoglires</taxon>
        <taxon>Glires</taxon>
        <taxon>Rodentia</taxon>
        <taxon>Myomorpha</taxon>
        <taxon>Muroidea</taxon>
        <taxon>Muridae</taxon>
        <taxon>Murinae</taxon>
        <taxon>Rattus</taxon>
    </lineage>
</organism>
<comment type="function">
    <text evidence="1">Acts as one of several non-catalytic accessory components of the cytoplasmic dynein 1 complex that are thought to be involved in linking dynein to cargos and to adapter proteins that regulate dynein function. Cytoplasmic dynein 1 acts as a motor for the intracellular retrograde motility of vesicles and organelles along microtubules. May play a role in changing or maintaining the spatial distribution of cytoskeletal structures (By similarity).</text>
</comment>
<comment type="subunit">
    <text evidence="2 3 5 6 7 8">Homodimer (PubMed:12904292). The cytoplasmic dynein 1 complex consists of two catalytic heavy chains (HCs) and a number of non-catalytic subunits which present intermediate chains (ICs), light intermediate chains (LICs) and light chains (LCs); the composition seems to vary in respect to the IC, LIC and LC composition. The heavy chain homodimer serves as a scaffold for the probable homodimeric assembly of the respective non-catalytic subunits. Dynein ICs and LICs bind directly to the HC dimer and the LCs assemble on the IC dimer (PubMed:11746667). Interacts with DYNC1I1 (By similarity). Interacts with GPHN (PubMed:12097491). Component of the myosin V motor complex (By similarity). Interacts with BMF (By similarity). Interacts with BCAS1 (PubMed:16133941). Interacts with Basson/BSN (By similarity). Interacts with AMBRA1 (via TQT motifs); tethering AMBRA1 to the cytoskeleton (By similarity). Interacts with IQUB (By similarity).</text>
</comment>
<comment type="subunit">
    <text evidence="4">(Microbial infection) Interacts with rabies virus phosphoprotein.</text>
</comment>
<comment type="subcellular location">
    <subcellularLocation>
        <location evidence="6">Cytoplasm</location>
        <location evidence="6">Cytoskeleton</location>
    </subcellularLocation>
</comment>
<comment type="similarity">
    <text evidence="9">Belongs to the dynein light chain family.</text>
</comment>
<comment type="caution">
    <text evidence="9">As DLC8 is commonly used to refer to both DLC1 and DLC2 proteins, it is preferable to adopt the following nomenclature (see PubMed:11602781) where DLC8a and DLC8b corresponds respectively to DLC1 and DLC2.</text>
</comment>
<gene>
    <name type="primary">Dynll2</name>
    <name type="synonym">Dlc2</name>
</gene>
<keyword id="KW-0002">3D-structure</keyword>
<keyword id="KW-0963">Cytoplasm</keyword>
<keyword id="KW-0206">Cytoskeleton</keyword>
<keyword id="KW-0903">Direct protein sequencing</keyword>
<keyword id="KW-0243">Dynein</keyword>
<keyword id="KW-0493">Microtubule</keyword>
<keyword id="KW-0505">Motor protein</keyword>
<keyword id="KW-1185">Reference proteome</keyword>
<keyword id="KW-0813">Transport</keyword>
<evidence type="ECO:0000250" key="1"/>
<evidence type="ECO:0000250" key="2">
    <source>
        <dbReference type="UniProtKB" id="Q96FJ2"/>
    </source>
</evidence>
<evidence type="ECO:0000250" key="3">
    <source>
        <dbReference type="UniProtKB" id="Q9D0M5"/>
    </source>
</evidence>
<evidence type="ECO:0000269" key="4">
    <source>
    </source>
</evidence>
<evidence type="ECO:0000269" key="5">
    <source>
    </source>
</evidence>
<evidence type="ECO:0000269" key="6">
    <source>
    </source>
</evidence>
<evidence type="ECO:0000269" key="7">
    <source>
    </source>
</evidence>
<evidence type="ECO:0000269" key="8">
    <source>
    </source>
</evidence>
<evidence type="ECO:0000305" key="9"/>
<evidence type="ECO:0007829" key="10">
    <source>
        <dbReference type="PDB" id="1PWJ"/>
    </source>
</evidence>
<evidence type="ECO:0007829" key="11">
    <source>
        <dbReference type="PDB" id="1PWK"/>
    </source>
</evidence>